<dbReference type="EC" id="2.4.2.-" evidence="1"/>
<dbReference type="EMBL" id="AK037903">
    <property type="protein sequence ID" value="BAC29897.1"/>
    <property type="molecule type" value="mRNA"/>
</dbReference>
<dbReference type="EMBL" id="AK050032">
    <property type="protein sequence ID" value="BAC34040.1"/>
    <property type="molecule type" value="mRNA"/>
</dbReference>
<dbReference type="EMBL" id="BC003281">
    <property type="protein sequence ID" value="AAH03281.1"/>
    <property type="molecule type" value="mRNA"/>
</dbReference>
<dbReference type="EMBL" id="BC070466">
    <property type="protein sequence ID" value="AAH70466.1"/>
    <property type="molecule type" value="mRNA"/>
</dbReference>
<dbReference type="CCDS" id="CCDS37326.1">
    <molecule id="Q8CAS9-2"/>
</dbReference>
<dbReference type="RefSeq" id="NP_001392227.1">
    <molecule id="Q8CAS9-2"/>
    <property type="nucleotide sequence ID" value="NM_001405298.1"/>
</dbReference>
<dbReference type="RefSeq" id="NP_001392228.1">
    <molecule id="Q8CAS9-1"/>
    <property type="nucleotide sequence ID" value="NM_001405299.1"/>
</dbReference>
<dbReference type="RefSeq" id="NP_001392229.1">
    <molecule id="Q8CAS9-1"/>
    <property type="nucleotide sequence ID" value="NM_001405300.1"/>
</dbReference>
<dbReference type="RefSeq" id="NP_084529.1">
    <molecule id="Q8CAS9-2"/>
    <property type="nucleotide sequence ID" value="NM_030253.4"/>
</dbReference>
<dbReference type="RefSeq" id="XP_006522818.1">
    <property type="nucleotide sequence ID" value="XM_006522755.2"/>
</dbReference>
<dbReference type="RefSeq" id="XP_006522819.1">
    <property type="nucleotide sequence ID" value="XM_006522756.3"/>
</dbReference>
<dbReference type="RefSeq" id="XP_006522820.1">
    <property type="nucleotide sequence ID" value="XM_006522757.3"/>
</dbReference>
<dbReference type="SMR" id="Q8CAS9"/>
<dbReference type="BioGRID" id="219773">
    <property type="interactions" value="7"/>
</dbReference>
<dbReference type="FunCoup" id="Q8CAS9">
    <property type="interactions" value="1450"/>
</dbReference>
<dbReference type="IntAct" id="Q8CAS9">
    <property type="interactions" value="1"/>
</dbReference>
<dbReference type="STRING" id="10090.ENSMUSP00000110528"/>
<dbReference type="GlyGen" id="Q8CAS9">
    <property type="glycosylation" value="1 site, 1 O-linked glycan (1 site)"/>
</dbReference>
<dbReference type="iPTMnet" id="Q8CAS9"/>
<dbReference type="PhosphoSitePlus" id="Q8CAS9"/>
<dbReference type="SwissPalm" id="Q8CAS9"/>
<dbReference type="jPOST" id="Q8CAS9"/>
<dbReference type="PaxDb" id="10090-ENSMUSP00000110528"/>
<dbReference type="PeptideAtlas" id="Q8CAS9"/>
<dbReference type="ProteomicsDB" id="287959">
    <molecule id="Q8CAS9-1"/>
</dbReference>
<dbReference type="ProteomicsDB" id="287960">
    <molecule id="Q8CAS9-2"/>
</dbReference>
<dbReference type="ProteomicsDB" id="287961">
    <molecule id="Q8CAS9-3"/>
</dbReference>
<dbReference type="Pumba" id="Q8CAS9"/>
<dbReference type="Antibodypedia" id="32910">
    <property type="antibodies" value="95 antibodies from 27 providers"/>
</dbReference>
<dbReference type="DNASU" id="80285"/>
<dbReference type="Ensembl" id="ENSMUST00000114878.8">
    <molecule id="Q8CAS9-2"/>
    <property type="protein sequence ID" value="ENSMUSP00000110528.2"/>
    <property type="gene ID" value="ENSMUSG00000022906.16"/>
</dbReference>
<dbReference type="GeneID" id="80285"/>
<dbReference type="KEGG" id="mmu:80285"/>
<dbReference type="UCSC" id="uc007zbx.1">
    <molecule id="Q8CAS9-1"/>
    <property type="organism name" value="mouse"/>
</dbReference>
<dbReference type="UCSC" id="uc007zby.2">
    <molecule id="Q8CAS9-2"/>
    <property type="organism name" value="mouse"/>
</dbReference>
<dbReference type="AGR" id="MGI:1933117"/>
<dbReference type="CTD" id="83666"/>
<dbReference type="MGI" id="MGI:1933117">
    <property type="gene designation" value="Parp9"/>
</dbReference>
<dbReference type="VEuPathDB" id="HostDB:ENSMUSG00000022906"/>
<dbReference type="eggNOG" id="KOG2633">
    <property type="taxonomic scope" value="Eukaryota"/>
</dbReference>
<dbReference type="GeneTree" id="ENSGT00940000158837"/>
<dbReference type="HOGENOM" id="CLU_012160_0_0_1"/>
<dbReference type="InParanoid" id="Q8CAS9"/>
<dbReference type="OMA" id="CTQIIVE"/>
<dbReference type="PhylomeDB" id="Q8CAS9"/>
<dbReference type="TreeFam" id="TF328965"/>
<dbReference type="Reactome" id="R-MMU-197264">
    <property type="pathway name" value="Nicotinamide salvaging"/>
</dbReference>
<dbReference type="BioGRID-ORCS" id="80285">
    <property type="hits" value="3 hits in 115 CRISPR screens"/>
</dbReference>
<dbReference type="PRO" id="PR:Q8CAS9"/>
<dbReference type="Proteomes" id="UP000000589">
    <property type="component" value="Chromosome 16"/>
</dbReference>
<dbReference type="RNAct" id="Q8CAS9">
    <property type="molecule type" value="protein"/>
</dbReference>
<dbReference type="Bgee" id="ENSMUSG00000022906">
    <property type="expression patterns" value="Expressed in small intestine Peyer's patch and 207 other cell types or tissues"/>
</dbReference>
<dbReference type="ExpressionAtlas" id="Q8CAS9">
    <property type="expression patterns" value="baseline and differential"/>
</dbReference>
<dbReference type="GO" id="GO:0005737">
    <property type="term" value="C:cytoplasm"/>
    <property type="evidence" value="ECO:0000250"/>
    <property type="project" value="UniProtKB"/>
</dbReference>
<dbReference type="GO" id="GO:0005829">
    <property type="term" value="C:cytosol"/>
    <property type="evidence" value="ECO:0007669"/>
    <property type="project" value="UniProtKB-SubCell"/>
</dbReference>
<dbReference type="GO" id="GO:0005739">
    <property type="term" value="C:mitochondrion"/>
    <property type="evidence" value="ECO:0007669"/>
    <property type="project" value="Ensembl"/>
</dbReference>
<dbReference type="GO" id="GO:0005654">
    <property type="term" value="C:nucleoplasm"/>
    <property type="evidence" value="ECO:0007669"/>
    <property type="project" value="Ensembl"/>
</dbReference>
<dbReference type="GO" id="GO:0005634">
    <property type="term" value="C:nucleus"/>
    <property type="evidence" value="ECO:0000250"/>
    <property type="project" value="UniProtKB"/>
</dbReference>
<dbReference type="GO" id="GO:0032991">
    <property type="term" value="C:protein-containing complex"/>
    <property type="evidence" value="ECO:0007669"/>
    <property type="project" value="Ensembl"/>
</dbReference>
<dbReference type="GO" id="GO:0090734">
    <property type="term" value="C:site of DNA damage"/>
    <property type="evidence" value="ECO:0007669"/>
    <property type="project" value="Ensembl"/>
</dbReference>
<dbReference type="GO" id="GO:0072570">
    <property type="term" value="F:ADP-D-ribose binding"/>
    <property type="evidence" value="ECO:0007669"/>
    <property type="project" value="Ensembl"/>
</dbReference>
<dbReference type="GO" id="GO:0004857">
    <property type="term" value="F:enzyme inhibitor activity"/>
    <property type="evidence" value="ECO:0007669"/>
    <property type="project" value="Ensembl"/>
</dbReference>
<dbReference type="GO" id="GO:0042393">
    <property type="term" value="F:histone binding"/>
    <property type="evidence" value="ECO:0007669"/>
    <property type="project" value="Ensembl"/>
</dbReference>
<dbReference type="GO" id="GO:0003950">
    <property type="term" value="F:NAD+ poly-ADP-ribosyltransferase activity"/>
    <property type="evidence" value="ECO:0000250"/>
    <property type="project" value="UniProtKB"/>
</dbReference>
<dbReference type="GO" id="GO:0140802">
    <property type="term" value="F:NAD+-protein-C-terminal glycine ADP-ribosyltransferase activity"/>
    <property type="evidence" value="ECO:0007669"/>
    <property type="project" value="Ensembl"/>
</dbReference>
<dbReference type="GO" id="GO:0016779">
    <property type="term" value="F:nucleotidyltransferase activity"/>
    <property type="evidence" value="ECO:0007669"/>
    <property type="project" value="UniProtKB-KW"/>
</dbReference>
<dbReference type="GO" id="GO:0097677">
    <property type="term" value="F:STAT family protein binding"/>
    <property type="evidence" value="ECO:0007669"/>
    <property type="project" value="Ensembl"/>
</dbReference>
<dbReference type="GO" id="GO:0003714">
    <property type="term" value="F:transcription corepressor activity"/>
    <property type="evidence" value="ECO:0007669"/>
    <property type="project" value="Ensembl"/>
</dbReference>
<dbReference type="GO" id="GO:0044389">
    <property type="term" value="F:ubiquitin-like protein ligase binding"/>
    <property type="evidence" value="ECO:0007669"/>
    <property type="project" value="Ensembl"/>
</dbReference>
<dbReference type="GO" id="GO:0051607">
    <property type="term" value="P:defense response to virus"/>
    <property type="evidence" value="ECO:0007669"/>
    <property type="project" value="UniProtKB-KW"/>
</dbReference>
<dbReference type="GO" id="GO:0000077">
    <property type="term" value="P:DNA damage checkpoint signaling"/>
    <property type="evidence" value="ECO:0007669"/>
    <property type="project" value="Ensembl"/>
</dbReference>
<dbReference type="GO" id="GO:0006302">
    <property type="term" value="P:double-strand break repair"/>
    <property type="evidence" value="ECO:0000250"/>
    <property type="project" value="UniProtKB"/>
</dbReference>
<dbReference type="GO" id="GO:0045087">
    <property type="term" value="P:innate immune response"/>
    <property type="evidence" value="ECO:0007669"/>
    <property type="project" value="UniProtKB-KW"/>
</dbReference>
<dbReference type="GO" id="GO:0010629">
    <property type="term" value="P:negative regulation of gene expression"/>
    <property type="evidence" value="ECO:0007669"/>
    <property type="project" value="Ensembl"/>
</dbReference>
<dbReference type="GO" id="GO:0000122">
    <property type="term" value="P:negative regulation of transcription by RNA polymerase II"/>
    <property type="evidence" value="ECO:0007669"/>
    <property type="project" value="Ensembl"/>
</dbReference>
<dbReference type="GO" id="GO:0002230">
    <property type="term" value="P:positive regulation of defense response to virus by host"/>
    <property type="evidence" value="ECO:0007669"/>
    <property type="project" value="Ensembl"/>
</dbReference>
<dbReference type="GO" id="GO:0045893">
    <property type="term" value="P:positive regulation of DNA-templated transcription"/>
    <property type="evidence" value="ECO:0007669"/>
    <property type="project" value="Ensembl"/>
</dbReference>
<dbReference type="GO" id="GO:1900182">
    <property type="term" value="P:positive regulation of protein localization to nucleus"/>
    <property type="evidence" value="ECO:0007669"/>
    <property type="project" value="Ensembl"/>
</dbReference>
<dbReference type="GO" id="GO:0060335">
    <property type="term" value="P:positive regulation of type II interferon-mediated signaling pathway"/>
    <property type="evidence" value="ECO:0000315"/>
    <property type="project" value="UniProtKB"/>
</dbReference>
<dbReference type="GO" id="GO:0010608">
    <property type="term" value="P:post-transcriptional regulation of gene expression"/>
    <property type="evidence" value="ECO:0007669"/>
    <property type="project" value="Ensembl"/>
</dbReference>
<dbReference type="GO" id="GO:0060330">
    <property type="term" value="P:regulation of response to type II interferon"/>
    <property type="evidence" value="ECO:0000250"/>
    <property type="project" value="UniProtKB"/>
</dbReference>
<dbReference type="CDD" id="cd02907">
    <property type="entry name" value="Macro_Af1521_BAL-like"/>
    <property type="match status" value="1"/>
</dbReference>
<dbReference type="CDD" id="cd01439">
    <property type="entry name" value="TCCD_inducible_PARP_like"/>
    <property type="match status" value="1"/>
</dbReference>
<dbReference type="FunFam" id="3.40.220.10:FF:000010">
    <property type="entry name" value="Poly [ADP-ribose] polymerase"/>
    <property type="match status" value="1"/>
</dbReference>
<dbReference type="Gene3D" id="3.90.228.10">
    <property type="match status" value="1"/>
</dbReference>
<dbReference type="Gene3D" id="3.40.220.10">
    <property type="entry name" value="Leucine Aminopeptidase, subunit E, domain 1"/>
    <property type="match status" value="2"/>
</dbReference>
<dbReference type="InterPro" id="IPR002589">
    <property type="entry name" value="Macro_dom"/>
</dbReference>
<dbReference type="InterPro" id="IPR043472">
    <property type="entry name" value="Macro_dom-like"/>
</dbReference>
<dbReference type="InterPro" id="IPR052056">
    <property type="entry name" value="Mono-ARTD/PARP"/>
</dbReference>
<dbReference type="InterPro" id="IPR057049">
    <property type="entry name" value="PARP14_KH_8"/>
</dbReference>
<dbReference type="InterPro" id="IPR012317">
    <property type="entry name" value="Poly(ADP-ribose)pol_cat_dom"/>
</dbReference>
<dbReference type="PANTHER" id="PTHR14453">
    <property type="entry name" value="PARP/ZINC FINGER CCCH TYPE DOMAIN CONTAINING PROTEIN"/>
    <property type="match status" value="1"/>
</dbReference>
<dbReference type="PANTHER" id="PTHR14453:SF70">
    <property type="entry name" value="PROTEIN MONO-ADP-RIBOSYLTRANSFERASE PARP9"/>
    <property type="match status" value="1"/>
</dbReference>
<dbReference type="Pfam" id="PF23254">
    <property type="entry name" value="KH_PARP14_8"/>
    <property type="match status" value="1"/>
</dbReference>
<dbReference type="Pfam" id="PF01661">
    <property type="entry name" value="Macro"/>
    <property type="match status" value="2"/>
</dbReference>
<dbReference type="SMART" id="SM00506">
    <property type="entry name" value="A1pp"/>
    <property type="match status" value="2"/>
</dbReference>
<dbReference type="SUPFAM" id="SSF56399">
    <property type="entry name" value="ADP-ribosylation"/>
    <property type="match status" value="1"/>
</dbReference>
<dbReference type="SUPFAM" id="SSF52949">
    <property type="entry name" value="Macro domain-like"/>
    <property type="match status" value="2"/>
</dbReference>
<dbReference type="PROSITE" id="PS51154">
    <property type="entry name" value="MACRO"/>
    <property type="match status" value="2"/>
</dbReference>
<dbReference type="PROSITE" id="PS51059">
    <property type="entry name" value="PARP_CATALYTIC"/>
    <property type="match status" value="1"/>
</dbReference>
<proteinExistence type="evidence at protein level"/>
<feature type="chain" id="PRO_0000211340" description="Protein mono-ADP-ribosyltransferase PARP9">
    <location>
        <begin position="1"/>
        <end position="866"/>
    </location>
</feature>
<feature type="domain" description="Macro 1" evidence="3">
    <location>
        <begin position="109"/>
        <end position="298"/>
    </location>
</feature>
<feature type="domain" description="Macro 2" evidence="3">
    <location>
        <begin position="313"/>
        <end position="492"/>
    </location>
</feature>
<feature type="domain" description="PARP catalytic" evidence="2">
    <location>
        <begin position="635"/>
        <end position="853"/>
    </location>
</feature>
<feature type="modified residue" description="Phosphoserine" evidence="10">
    <location>
        <position position="42"/>
    </location>
</feature>
<feature type="splice variant" id="VSP_008506" description="In isoform 2." evidence="7 8">
    <location>
        <begin position="17"/>
        <end position="52"/>
    </location>
</feature>
<feature type="splice variant" id="VSP_008507" description="In isoform 3." evidence="8">
    <location>
        <begin position="679"/>
        <end position="866"/>
    </location>
</feature>
<accession>Q8CAS9</accession>
<accession>Q6IRT6</accession>
<accession>Q99LF9</accession>
<reference key="1">
    <citation type="journal article" date="2005" name="Science">
        <title>The transcriptional landscape of the mammalian genome.</title>
        <authorList>
            <person name="Carninci P."/>
            <person name="Kasukawa T."/>
            <person name="Katayama S."/>
            <person name="Gough J."/>
            <person name="Frith M.C."/>
            <person name="Maeda N."/>
            <person name="Oyama R."/>
            <person name="Ravasi T."/>
            <person name="Lenhard B."/>
            <person name="Wells C."/>
            <person name="Kodzius R."/>
            <person name="Shimokawa K."/>
            <person name="Bajic V.B."/>
            <person name="Brenner S.E."/>
            <person name="Batalov S."/>
            <person name="Forrest A.R."/>
            <person name="Zavolan M."/>
            <person name="Davis M.J."/>
            <person name="Wilming L.G."/>
            <person name="Aidinis V."/>
            <person name="Allen J.E."/>
            <person name="Ambesi-Impiombato A."/>
            <person name="Apweiler R."/>
            <person name="Aturaliya R.N."/>
            <person name="Bailey T.L."/>
            <person name="Bansal M."/>
            <person name="Baxter L."/>
            <person name="Beisel K.W."/>
            <person name="Bersano T."/>
            <person name="Bono H."/>
            <person name="Chalk A.M."/>
            <person name="Chiu K.P."/>
            <person name="Choudhary V."/>
            <person name="Christoffels A."/>
            <person name="Clutterbuck D.R."/>
            <person name="Crowe M.L."/>
            <person name="Dalla E."/>
            <person name="Dalrymple B.P."/>
            <person name="de Bono B."/>
            <person name="Della Gatta G."/>
            <person name="di Bernardo D."/>
            <person name="Down T."/>
            <person name="Engstrom P."/>
            <person name="Fagiolini M."/>
            <person name="Faulkner G."/>
            <person name="Fletcher C.F."/>
            <person name="Fukushima T."/>
            <person name="Furuno M."/>
            <person name="Futaki S."/>
            <person name="Gariboldi M."/>
            <person name="Georgii-Hemming P."/>
            <person name="Gingeras T.R."/>
            <person name="Gojobori T."/>
            <person name="Green R.E."/>
            <person name="Gustincich S."/>
            <person name="Harbers M."/>
            <person name="Hayashi Y."/>
            <person name="Hensch T.K."/>
            <person name="Hirokawa N."/>
            <person name="Hill D."/>
            <person name="Huminiecki L."/>
            <person name="Iacono M."/>
            <person name="Ikeo K."/>
            <person name="Iwama A."/>
            <person name="Ishikawa T."/>
            <person name="Jakt M."/>
            <person name="Kanapin A."/>
            <person name="Katoh M."/>
            <person name="Kawasawa Y."/>
            <person name="Kelso J."/>
            <person name="Kitamura H."/>
            <person name="Kitano H."/>
            <person name="Kollias G."/>
            <person name="Krishnan S.P."/>
            <person name="Kruger A."/>
            <person name="Kummerfeld S.K."/>
            <person name="Kurochkin I.V."/>
            <person name="Lareau L.F."/>
            <person name="Lazarevic D."/>
            <person name="Lipovich L."/>
            <person name="Liu J."/>
            <person name="Liuni S."/>
            <person name="McWilliam S."/>
            <person name="Madan Babu M."/>
            <person name="Madera M."/>
            <person name="Marchionni L."/>
            <person name="Matsuda H."/>
            <person name="Matsuzawa S."/>
            <person name="Miki H."/>
            <person name="Mignone F."/>
            <person name="Miyake S."/>
            <person name="Morris K."/>
            <person name="Mottagui-Tabar S."/>
            <person name="Mulder N."/>
            <person name="Nakano N."/>
            <person name="Nakauchi H."/>
            <person name="Ng P."/>
            <person name="Nilsson R."/>
            <person name="Nishiguchi S."/>
            <person name="Nishikawa S."/>
            <person name="Nori F."/>
            <person name="Ohara O."/>
            <person name="Okazaki Y."/>
            <person name="Orlando V."/>
            <person name="Pang K.C."/>
            <person name="Pavan W.J."/>
            <person name="Pavesi G."/>
            <person name="Pesole G."/>
            <person name="Petrovsky N."/>
            <person name="Piazza S."/>
            <person name="Reed J."/>
            <person name="Reid J.F."/>
            <person name="Ring B.Z."/>
            <person name="Ringwald M."/>
            <person name="Rost B."/>
            <person name="Ruan Y."/>
            <person name="Salzberg S.L."/>
            <person name="Sandelin A."/>
            <person name="Schneider C."/>
            <person name="Schoenbach C."/>
            <person name="Sekiguchi K."/>
            <person name="Semple C.A."/>
            <person name="Seno S."/>
            <person name="Sessa L."/>
            <person name="Sheng Y."/>
            <person name="Shibata Y."/>
            <person name="Shimada H."/>
            <person name="Shimada K."/>
            <person name="Silva D."/>
            <person name="Sinclair B."/>
            <person name="Sperling S."/>
            <person name="Stupka E."/>
            <person name="Sugiura K."/>
            <person name="Sultana R."/>
            <person name="Takenaka Y."/>
            <person name="Taki K."/>
            <person name="Tammoja K."/>
            <person name="Tan S.L."/>
            <person name="Tang S."/>
            <person name="Taylor M.S."/>
            <person name="Tegner J."/>
            <person name="Teichmann S.A."/>
            <person name="Ueda H.R."/>
            <person name="van Nimwegen E."/>
            <person name="Verardo R."/>
            <person name="Wei C.L."/>
            <person name="Yagi K."/>
            <person name="Yamanishi H."/>
            <person name="Zabarovsky E."/>
            <person name="Zhu S."/>
            <person name="Zimmer A."/>
            <person name="Hide W."/>
            <person name="Bult C."/>
            <person name="Grimmond S.M."/>
            <person name="Teasdale R.D."/>
            <person name="Liu E.T."/>
            <person name="Brusic V."/>
            <person name="Quackenbush J."/>
            <person name="Wahlestedt C."/>
            <person name="Mattick J.S."/>
            <person name="Hume D.A."/>
            <person name="Kai C."/>
            <person name="Sasaki D."/>
            <person name="Tomaru Y."/>
            <person name="Fukuda S."/>
            <person name="Kanamori-Katayama M."/>
            <person name="Suzuki M."/>
            <person name="Aoki J."/>
            <person name="Arakawa T."/>
            <person name="Iida J."/>
            <person name="Imamura K."/>
            <person name="Itoh M."/>
            <person name="Kato T."/>
            <person name="Kawaji H."/>
            <person name="Kawagashira N."/>
            <person name="Kawashima T."/>
            <person name="Kojima M."/>
            <person name="Kondo S."/>
            <person name="Konno H."/>
            <person name="Nakano K."/>
            <person name="Ninomiya N."/>
            <person name="Nishio T."/>
            <person name="Okada M."/>
            <person name="Plessy C."/>
            <person name="Shibata K."/>
            <person name="Shiraki T."/>
            <person name="Suzuki S."/>
            <person name="Tagami M."/>
            <person name="Waki K."/>
            <person name="Watahiki A."/>
            <person name="Okamura-Oho Y."/>
            <person name="Suzuki H."/>
            <person name="Kawai J."/>
            <person name="Hayashizaki Y."/>
        </authorList>
    </citation>
    <scope>NUCLEOTIDE SEQUENCE [LARGE SCALE MRNA] (ISOFORMS 2 AND 3)</scope>
    <source>
        <strain>C57BL/6J</strain>
        <tissue>Liver</tissue>
        <tissue>Thymus</tissue>
    </source>
</reference>
<reference key="2">
    <citation type="journal article" date="2004" name="Genome Res.">
        <title>The status, quality, and expansion of the NIH full-length cDNA project: the Mammalian Gene Collection (MGC).</title>
        <authorList>
            <consortium name="The MGC Project Team"/>
        </authorList>
    </citation>
    <scope>NUCLEOTIDE SEQUENCE [LARGE SCALE MRNA] (ISOFORM 2)</scope>
    <source>
        <strain>C57BL/6J</strain>
        <tissue>Eye</tissue>
        <tissue>Mammary tumor</tissue>
    </source>
</reference>
<reference key="3">
    <citation type="journal article" date="2008" name="Dev. Dyn.">
        <title>The macroPARP genes Parp-9 and Parp-14 are developmentally and differentially regulated in mouse tissues.</title>
        <authorList>
            <person name="Hakme A."/>
            <person name="Huber A."/>
            <person name="Dolle P."/>
            <person name="Schreiber V."/>
        </authorList>
    </citation>
    <scope>TISSUE SPECIFICITY</scope>
    <scope>DEVELOPMENTAL STAGE</scope>
</reference>
<reference key="4">
    <citation type="journal article" date="2009" name="Immunity">
        <title>The phagosomal proteome in interferon-gamma-activated macrophages.</title>
        <authorList>
            <person name="Trost M."/>
            <person name="English L."/>
            <person name="Lemieux S."/>
            <person name="Courcelles M."/>
            <person name="Desjardins M."/>
            <person name="Thibault P."/>
        </authorList>
    </citation>
    <scope>PHOSPHORYLATION [LARGE SCALE ANALYSIS] AT SER-42</scope>
    <scope>IDENTIFICATION BY MASS SPECTROMETRY [LARGE SCALE ANALYSIS]</scope>
</reference>
<reference key="5">
    <citation type="journal article" date="2010" name="Cell">
        <title>A tissue-specific atlas of mouse protein phosphorylation and expression.</title>
        <authorList>
            <person name="Huttlin E.L."/>
            <person name="Jedrychowski M.P."/>
            <person name="Elias J.E."/>
            <person name="Goswami T."/>
            <person name="Rad R."/>
            <person name="Beausoleil S.A."/>
            <person name="Villen J."/>
            <person name="Haas W."/>
            <person name="Sowa M.E."/>
            <person name="Gygi S.P."/>
        </authorList>
    </citation>
    <scope>IDENTIFICATION BY MASS SPECTROMETRY [LARGE SCALE ANALYSIS]</scope>
    <source>
        <tissue>Liver</tissue>
        <tissue>Lung</tissue>
        <tissue>Spleen</tissue>
    </source>
</reference>
<reference key="6">
    <citation type="journal article" date="2016" name="Nat. Commun.">
        <title>PARP9 and PARP14 cross-regulate macrophage activation via STAT1 ADP-ribosylation.</title>
        <authorList>
            <person name="Iwata H."/>
            <person name="Goettsch C."/>
            <person name="Sharma A."/>
            <person name="Ricchiuto P."/>
            <person name="Goh W.W."/>
            <person name="Halu A."/>
            <person name="Yamada I."/>
            <person name="Yoshida H."/>
            <person name="Hara T."/>
            <person name="Wei M."/>
            <person name="Inoue N."/>
            <person name="Fukuda D."/>
            <person name="Mojcher A."/>
            <person name="Mattson P.C."/>
            <person name="Barabasi A.L."/>
            <person name="Boothby M."/>
            <person name="Aikawa E."/>
            <person name="Singh S.A."/>
            <person name="Aikawa M."/>
        </authorList>
    </citation>
    <scope>FUNCTION</scope>
    <scope>TISSUE SPECIFICITY</scope>
    <scope>INDUCTION</scope>
</reference>
<reference key="7">
    <citation type="journal article" date="2017" name="Eur. J. Immunol.">
        <title>Robust immunoglobulin class switch recombination and end joining in Parp9-deficient mice.</title>
        <authorList>
            <person name="Robert I."/>
            <person name="Gaudot L."/>
            <person name="Yelamos J."/>
            <person name="Noll A."/>
            <person name="Wong H.K."/>
            <person name="Dantzer F."/>
            <person name="Schreiber V."/>
            <person name="Reina-San-Martin B."/>
        </authorList>
    </citation>
    <scope>FUNCTION</scope>
    <scope>DISRUPTION PHENOTYPE</scope>
</reference>
<sequence>MAYYMDTWAAAPAERPGMIASLSLSFKKAFAELFPQRRRGHSEGDYPPLRGSANNSLEEHYRWQIPIKHNVFEILKSNESQLCEVLQNKFGCISTLSCPTLAGSSSPAQRVFRRTLIPGIELSVWKDDLTRHVVDAVVNAANENLLHGSGLAGSLVKTGGFEIQEESKRIIANVGKISVGGIAITGAGRLPCHLIIHAVGPRWTVTNSQTAIELLKFAIRNILDYVTKYDLRIKTVAIPALSSGIFQFPLDLCTSIILETIRLYFQDKQMFGNLREIHLVSNEDPTVASFKSASESILGRDLSSWGGPETDPASTMTLRIGRGLTLQIVQGCIEMQTTDVIVNSGYMQDFKSGRVAQSILRQAGVEMEKELDKVNLSTDYQEVWVTKGFKLSCQYVFHVAWHSQINKYQILKDAMKSCLEKCLKPDINSISFPALGTGLMDLKKSTAAQIMFEEVFAFAKEHKEKTLTVKIVIFPVDVETYKIFYAEMTKRSNELNLSGNSGALALQWSSGEQRRGGLEAGSPAINLMGVKVGEMCEAQEWIERLLVSLDHHIIENNHILYLGKKEHDVLSELQTSTRVSISETVSPRTATLEIKGPQADLIDAVMRIECMLCDVQEEVAGKREKNLWSLSGQGTNQQEKLDKMEESYTFQRYPASLTQELQDRKKQFEKCGLWVVQVEQIDNKVLLAAFQEKKKMMEERTPKGSGSQRLFQQVPHQFCNTVCRVGFHRMYSTSYNPVYGAGIYFTKSLKNLADKVKKTSSTDKLIYVFEAEVLTGSFCQGNSSNIIPPPLSPGALDVNDSVVDNVSSPETIVVFNGMQAMPLYLWTCTQDRTFSQHPMWSQGYSSGPGMVSSLQSWEWVLNGSSV</sequence>
<name>PARP9_MOUSE</name>
<organism>
    <name type="scientific">Mus musculus</name>
    <name type="common">Mouse</name>
    <dbReference type="NCBI Taxonomy" id="10090"/>
    <lineage>
        <taxon>Eukaryota</taxon>
        <taxon>Metazoa</taxon>
        <taxon>Chordata</taxon>
        <taxon>Craniata</taxon>
        <taxon>Vertebrata</taxon>
        <taxon>Euteleostomi</taxon>
        <taxon>Mammalia</taxon>
        <taxon>Eutheria</taxon>
        <taxon>Euarchontoglires</taxon>
        <taxon>Glires</taxon>
        <taxon>Rodentia</taxon>
        <taxon>Myomorpha</taxon>
        <taxon>Muroidea</taxon>
        <taxon>Muridae</taxon>
        <taxon>Murinae</taxon>
        <taxon>Mus</taxon>
        <taxon>Mus</taxon>
    </lineage>
</organism>
<comment type="function">
    <text evidence="1 5 6">ADP-ribosyltransferase which, in association with E3 ligase DTX3L, plays a role in DNA damage repair and in immune responses including interferon-mediated antiviral defenses (PubMed:27796300). Within the complex, enhances DTX3L E3 ligase activity which is further enhanced by PARP9 binding to poly(ADP-ribose) (By similarity). In addition, positively regulates DTXL3 protein levels (By similarity). In association with DTX3L and in presence of E1 and E2 enzymes, mediates NAD(+)-dependent mono-ADP-ribosylation of ubiquitin which prevents ubiquitin conjugation to substrates such as histones (By similarity). During DNA repair, PARP1 recruits PARP9/BAL1-DTX3L complex to DNA damage sites via PARP9 binding to ribosylated PARP1 (By similarity). Subsequent PARP1-dependent PARP9/BAL1-DTX3L-mediated ubiquitination promotes the rapid and specific recruitment of 53BP1/TP53BP1, UIMC1/RAP80, and BRCA1 to DNA damage sites (By similarity). In response to DNA damage, PARP9-DTX3L complex is required for efficient non-homologous end joining (NHEJ) but the complex function is restrained by PARP9 activity (By similarity). Dispensable for B-cell receptor (BCR) assembly through V(D)J recombination and class switch recombination (CSR) (PubMed:28105679). In macrophages, positively regulates pro-inflammatory cytokines production in response to IFNG stimulation by suppressing PARP14-mediated STAT1 ADP-ribosylation and thus promoting STAT1 phosphorylation (PubMed:27796300). Also suppresses PARP14-mediated STAT6 ADP-ribosylation (By similarity).</text>
</comment>
<comment type="catalytic activity">
    <reaction evidence="1">
        <text>[protein]-C-terminal glycine + NAD(+) = [protein]-C-terminal O-(ADP-D-ribosyl)-glycine + nicotinamide</text>
        <dbReference type="Rhea" id="RHEA:58268"/>
        <dbReference type="Rhea" id="RHEA-COMP:15093"/>
        <dbReference type="Rhea" id="RHEA-COMP:15095"/>
        <dbReference type="ChEBI" id="CHEBI:17154"/>
        <dbReference type="ChEBI" id="CHEBI:57540"/>
        <dbReference type="ChEBI" id="CHEBI:83148"/>
        <dbReference type="ChEBI" id="CHEBI:142558"/>
    </reaction>
</comment>
<comment type="activity regulation">
    <text evidence="1">Binding to poly(ADP-ribose) does not affect its activity.</text>
</comment>
<comment type="subunit">
    <text evidence="1">Forms a stable complex with E3 ligase DTX3L; the interaction is required for PARP9 mediated ADP-ribosylation of ubiquitin. Interacts (via PARP catalytic domain) with DTX3L (via N-terminus). Forms a complex with STAT1 and DTX3L independently of IFNB1 or IFNG-mediated STAT1 'Tyr-701' phosphorylation. Forms a complex with STAT1, DTX3L and histone H2B H2BC9/H2BJ; the interaction is likely to induce H2BC9/H2BJ ubiquitination. Interacts (via N-terminus) with STAT1. Interacts with PARP14 in IFNG-stimulated macrophages; the interaction prevents PARP14-mediated STAT1 and STAT6 ADP-riboslylation. Interacts with PARP1 (when poly-ADP-ribosylated).</text>
</comment>
<comment type="subcellular location">
    <subcellularLocation>
        <location evidence="1">Cytoplasm</location>
        <location evidence="1">Cytosol</location>
    </subcellularLocation>
    <subcellularLocation>
        <location evidence="1">Nucleus</location>
    </subcellularLocation>
    <text evidence="1">Shuttles between the nucleus and the cytosol. Translocates to the nucleus in response to IFNG or IFNB1 stimulation. Export to the cytosol depends on the interaction with DTX3L. Localizes at sites of DNA damage in a PARP1-dependent manner.</text>
</comment>
<comment type="alternative products">
    <event type="alternative splicing"/>
    <isoform>
        <id>Q8CAS9-1</id>
        <name>1</name>
        <sequence type="displayed"/>
    </isoform>
    <isoform>
        <id>Q8CAS9-2</id>
        <name>2</name>
        <sequence type="described" ref="VSP_008506"/>
    </isoform>
    <isoform>
        <id>Q8CAS9-3</id>
        <name>3</name>
        <sequence type="described" ref="VSP_008507"/>
    </isoform>
</comment>
<comment type="tissue specificity">
    <text evidence="4 5">Highly expressed in the thymus and intestine (PubMed:18069692). Expressed in macrophages (PubMed:27796300).</text>
</comment>
<comment type="developmental stage">
    <text evidence="4">Developmentally regulated. Expressed prominently in the developing thymus and the gut, and also weakly expressed in specific regions of the developing brain.</text>
</comment>
<comment type="induction">
    <text evidence="5">Up-regulated by IFNG in macrophages. Down-regulated by IL4 in macrophages.</text>
</comment>
<comment type="domain">
    <text evidence="1">Macro domains 1 and 2 may be involved in the binding to poly(ADP-ribose). Macro domain 2 is required for recruitment to DNA damage sites. Macro domains 1 and 2 are probably dispensable for the interaction with STAT1 and DTX3L and for STAT1 phosphorylation.</text>
</comment>
<comment type="PTM">
    <text evidence="1">ADP-ribosylated by PARP14.</text>
</comment>
<comment type="disruption phenotype">
    <text evidence="6">No visible phenotype. Mice are viable, fertile and are born at the expected Mendelian rate with a slight decrease in male frequency. No defect in B-cell development, maturation and maintenance in periphery. Slight decrease in the number of follicular B-cell associated with an increase in the number of marginal zone B-cells.</text>
</comment>
<comment type="similarity">
    <text evidence="9">Belongs to the ARTD/PARP family.</text>
</comment>
<evidence type="ECO:0000250" key="1">
    <source>
        <dbReference type="UniProtKB" id="Q8IXQ6"/>
    </source>
</evidence>
<evidence type="ECO:0000255" key="2">
    <source>
        <dbReference type="PROSITE-ProRule" id="PRU00397"/>
    </source>
</evidence>
<evidence type="ECO:0000255" key="3">
    <source>
        <dbReference type="PROSITE-ProRule" id="PRU00490"/>
    </source>
</evidence>
<evidence type="ECO:0000269" key="4">
    <source>
    </source>
</evidence>
<evidence type="ECO:0000269" key="5">
    <source>
    </source>
</evidence>
<evidence type="ECO:0000269" key="6">
    <source>
    </source>
</evidence>
<evidence type="ECO:0000303" key="7">
    <source>
    </source>
</evidence>
<evidence type="ECO:0000303" key="8">
    <source>
    </source>
</evidence>
<evidence type="ECO:0000305" key="9"/>
<evidence type="ECO:0007744" key="10">
    <source>
    </source>
</evidence>
<gene>
    <name type="primary">Parp9</name>
    <name type="synonym">Bal</name>
</gene>
<keyword id="KW-0013">ADP-ribosylation</keyword>
<keyword id="KW-0025">Alternative splicing</keyword>
<keyword id="KW-0051">Antiviral defense</keyword>
<keyword id="KW-0963">Cytoplasm</keyword>
<keyword id="KW-0227">DNA damage</keyword>
<keyword id="KW-0234">DNA repair</keyword>
<keyword id="KW-0328">Glycosyltransferase</keyword>
<keyword id="KW-0391">Immunity</keyword>
<keyword id="KW-0399">Innate immunity</keyword>
<keyword id="KW-0520">NAD</keyword>
<keyword id="KW-0548">Nucleotidyltransferase</keyword>
<keyword id="KW-0539">Nucleus</keyword>
<keyword id="KW-0597">Phosphoprotein</keyword>
<keyword id="KW-1185">Reference proteome</keyword>
<keyword id="KW-0677">Repeat</keyword>
<keyword id="KW-0808">Transferase</keyword>
<protein>
    <recommendedName>
        <fullName evidence="9">Protein mono-ADP-ribosyltransferase PARP9</fullName>
        <ecNumber evidence="1">2.4.2.-</ecNumber>
    </recommendedName>
    <alternativeName>
        <fullName>ADP-ribosyltransferase diphtheria toxin-like 9</fullName>
        <shortName>ARTD9</shortName>
    </alternativeName>
    <alternativeName>
        <fullName>B aggressive lymphoma protein homolog</fullName>
    </alternativeName>
    <alternativeName>
        <fullName>Poly [ADP-ribose] polymerase 9</fullName>
        <shortName>PARP-9</shortName>
    </alternativeName>
</protein>